<reference key="1">
    <citation type="journal article" date="1984" name="J. Bacteriol.">
        <title>Complete nucleotide sequence and start sites for transcription and translation of the Bacillus megaterium protein C gene.</title>
        <authorList>
            <person name="Fliss E.R."/>
            <person name="Setlow P."/>
        </authorList>
    </citation>
    <scope>NUCLEOTIDE SEQUENCE [GENOMIC DNA]</scope>
</reference>
<reference key="2">
    <citation type="journal article" date="1980" name="J. Biol. Chem.">
        <title>The amino acid sequence specificity of a protease from spores of Bacillus megaterium.</title>
        <authorList>
            <person name="Setlow P."/>
            <person name="Gerard C."/>
            <person name="Ozols J."/>
        </authorList>
    </citation>
    <scope>PROTEIN SEQUENCE OF 2-39</scope>
</reference>
<reference key="3">
    <citation type="journal article" date="1980" name="J. Biol. Chem.">
        <title>Covalent structure of protein C. A second major low molecular weight protein degraded during germination of Bacillus megaterium spores.</title>
        <authorList>
            <person name="Setlow P."/>
            <person name="Ozols J."/>
        </authorList>
    </citation>
    <scope>PROTEIN SEQUENCE OF 2-15 AND 32-72</scope>
</reference>
<feature type="initiator methionine" description="Removed" evidence="1 2">
    <location>
        <position position="1"/>
    </location>
</feature>
<feature type="chain" id="PRO_0000196293" description="Small, acid-soluble spore protein C">
    <location>
        <begin position="2"/>
        <end position="72"/>
    </location>
</feature>
<feature type="site" description="Cleavage; by spore protease">
    <location>
        <begin position="31"/>
        <end position="32"/>
    </location>
</feature>
<protein>
    <recommendedName>
        <fullName>Small, acid-soluble spore protein C</fullName>
        <shortName>SASP</shortName>
    </recommendedName>
</protein>
<gene>
    <name type="primary">sasP-C</name>
</gene>
<evidence type="ECO:0000269" key="1">
    <source>
    </source>
</evidence>
<evidence type="ECO:0000269" key="2">
    <source>
    </source>
</evidence>
<evidence type="ECO:0000305" key="3"/>
<accession>P02960</accession>
<dbReference type="EMBL" id="K01833">
    <property type="protein sequence ID" value="AAA22282.1"/>
    <property type="molecule type" value="Genomic_DNA"/>
</dbReference>
<dbReference type="PIR" id="I39794">
    <property type="entry name" value="USBSCM"/>
</dbReference>
<dbReference type="RefSeq" id="WP_013055290.1">
    <property type="nucleotide sequence ID" value="NZ_WWFB01000007.1"/>
</dbReference>
<dbReference type="SMR" id="P02960"/>
<dbReference type="MetOSite" id="P02960"/>
<dbReference type="OMA" id="EDYWGNL"/>
<dbReference type="GO" id="GO:0003690">
    <property type="term" value="F:double-stranded DNA binding"/>
    <property type="evidence" value="ECO:0007669"/>
    <property type="project" value="InterPro"/>
</dbReference>
<dbReference type="GO" id="GO:0006265">
    <property type="term" value="P:DNA topological change"/>
    <property type="evidence" value="ECO:0007669"/>
    <property type="project" value="InterPro"/>
</dbReference>
<dbReference type="GO" id="GO:0030435">
    <property type="term" value="P:sporulation resulting in formation of a cellular spore"/>
    <property type="evidence" value="ECO:0007669"/>
    <property type="project" value="UniProtKB-KW"/>
</dbReference>
<dbReference type="Gene3D" id="6.10.10.80">
    <property type="entry name" value="Small, acid-soluble spore protein, alpha/beta type-like"/>
    <property type="match status" value="1"/>
</dbReference>
<dbReference type="InterPro" id="IPR001448">
    <property type="entry name" value="SASP_alpha/beta-type"/>
</dbReference>
<dbReference type="InterPro" id="IPR018126">
    <property type="entry name" value="SASP_alpha/beta-type_CS"/>
</dbReference>
<dbReference type="InterPro" id="IPR050847">
    <property type="entry name" value="SASP_DNA-binding"/>
</dbReference>
<dbReference type="InterPro" id="IPR038300">
    <property type="entry name" value="SASP_sf_alpha/beta"/>
</dbReference>
<dbReference type="PANTHER" id="PTHR36107">
    <property type="entry name" value="SMALL, ACID-SOLUBLE SPORE PROTEIN A"/>
    <property type="match status" value="1"/>
</dbReference>
<dbReference type="PANTHER" id="PTHR36107:SF1">
    <property type="entry name" value="SMALL, ACID-SOLUBLE SPORE PROTEIN A"/>
    <property type="match status" value="1"/>
</dbReference>
<dbReference type="Pfam" id="PF00269">
    <property type="entry name" value="SASP"/>
    <property type="match status" value="1"/>
</dbReference>
<dbReference type="PROSITE" id="PS00304">
    <property type="entry name" value="SASP_1"/>
    <property type="match status" value="1"/>
</dbReference>
<dbReference type="PROSITE" id="PS00684">
    <property type="entry name" value="SASP_2"/>
    <property type="match status" value="1"/>
</dbReference>
<sequence length="72" mass="7554">MANYQNASNRNSSNKLVAPGAQAAIDQMKFEIASEFGVNLGPDATARANGSVGGEITKRLVQLAEQNLGGKY</sequence>
<keyword id="KW-0903">Direct protein sequencing</keyword>
<keyword id="KW-0238">DNA-binding</keyword>
<keyword id="KW-0749">Sporulation</keyword>
<proteinExistence type="evidence at protein level"/>
<comment type="function">
    <text>SASP are bound to spore DNA. They are double-stranded DNA-binding proteins that cause DNA to change to an a-like conformation. They protect the DNA backbone from chemical and enzymatic cleavage and are thus involved in dormant spore's high resistance to UV light.</text>
</comment>
<comment type="miscellaneous">
    <text>SASP are degraded in the first minutes of spore germination and provide amino acids for both new protein synthesis and metabolism.</text>
</comment>
<comment type="similarity">
    <text evidence="3">Belongs to the alpha/beta-type SASP family.</text>
</comment>
<organism>
    <name type="scientific">Priestia megaterium</name>
    <name type="common">Bacillus megaterium</name>
    <dbReference type="NCBI Taxonomy" id="1404"/>
    <lineage>
        <taxon>Bacteria</taxon>
        <taxon>Bacillati</taxon>
        <taxon>Bacillota</taxon>
        <taxon>Bacilli</taxon>
        <taxon>Bacillales</taxon>
        <taxon>Bacillaceae</taxon>
        <taxon>Priestia</taxon>
    </lineage>
</organism>
<name>SASC_PRIMG</name>